<proteinExistence type="inferred from homology"/>
<keyword id="KW-0328">Glycosyltransferase</keyword>
<keyword id="KW-0678">Repressor</keyword>
<keyword id="KW-0694">RNA-binding</keyword>
<keyword id="KW-0804">Transcription</keyword>
<keyword id="KW-0805">Transcription regulation</keyword>
<keyword id="KW-0806">Transcription termination</keyword>
<keyword id="KW-0808">Transferase</keyword>
<gene>
    <name type="primary">pyrR</name>
    <name type="ordered locus">TT_C0428</name>
</gene>
<comment type="function">
    <text evidence="1">Probably regulates transcriptional attenuation of the pyrimidine nucleotide (pyr) operon in response to exogenous pyrimidines. In contrast to pyr attenuation in Bacillus, PyrR from Thermus could act as a translational repressor: the binding of PyrR at its proposed recognition site in the transcript would prevent initiation of translation of the leader peptide, resulting in terminator formation and reduced expression of downstream genes (By similarity). Also displays uracil phosphoribosyltransferase activity (By similarity).</text>
</comment>
<comment type="catalytic activity">
    <reaction>
        <text>UMP + diphosphate = 5-phospho-alpha-D-ribose 1-diphosphate + uracil</text>
        <dbReference type="Rhea" id="RHEA:13017"/>
        <dbReference type="ChEBI" id="CHEBI:17568"/>
        <dbReference type="ChEBI" id="CHEBI:33019"/>
        <dbReference type="ChEBI" id="CHEBI:57865"/>
        <dbReference type="ChEBI" id="CHEBI:58017"/>
        <dbReference type="EC" id="2.4.2.9"/>
    </reaction>
</comment>
<comment type="similarity">
    <text evidence="2">Belongs to the purine/pyrimidine phosphoribosyltransferase family. PyrR subfamily.</text>
</comment>
<accession>Q72KT9</accession>
<sequence length="181" mass="20467">MRFKAELMNAPEMRRALYRIAHEIVEANKGTEGLALVGIHTRGIPLAHRIARFIAEFEGKEVPVGVLDITLYRDDLTEIGYRPQVRETRIPFDLTGKAIVLVDDVLYTGRTARAALDALIDLGRPRRIYLAVLVDRGHRELPIRADFVGKNVPTSRSEVVKVKVEEVDGEDRVELWEREGA</sequence>
<dbReference type="EC" id="2.4.2.9"/>
<dbReference type="EMBL" id="AE017221">
    <property type="protein sequence ID" value="AAS80776.1"/>
    <property type="molecule type" value="Genomic_DNA"/>
</dbReference>
<dbReference type="RefSeq" id="WP_011172875.1">
    <property type="nucleotide sequence ID" value="NC_005835.1"/>
</dbReference>
<dbReference type="SMR" id="Q72KT9"/>
<dbReference type="GeneID" id="3169141"/>
<dbReference type="KEGG" id="tth:TT_C0428"/>
<dbReference type="eggNOG" id="COG2065">
    <property type="taxonomic scope" value="Bacteria"/>
</dbReference>
<dbReference type="HOGENOM" id="CLU_094234_2_1_0"/>
<dbReference type="OrthoDB" id="9802227at2"/>
<dbReference type="Proteomes" id="UP000000592">
    <property type="component" value="Chromosome"/>
</dbReference>
<dbReference type="GO" id="GO:0003723">
    <property type="term" value="F:RNA binding"/>
    <property type="evidence" value="ECO:0007669"/>
    <property type="project" value="UniProtKB-KW"/>
</dbReference>
<dbReference type="GO" id="GO:0004845">
    <property type="term" value="F:uracil phosphoribosyltransferase activity"/>
    <property type="evidence" value="ECO:0007669"/>
    <property type="project" value="UniProtKB-UniRule"/>
</dbReference>
<dbReference type="GO" id="GO:0006353">
    <property type="term" value="P:DNA-templated transcription termination"/>
    <property type="evidence" value="ECO:0007669"/>
    <property type="project" value="UniProtKB-KW"/>
</dbReference>
<dbReference type="GO" id="GO:0006355">
    <property type="term" value="P:regulation of DNA-templated transcription"/>
    <property type="evidence" value="ECO:0007669"/>
    <property type="project" value="UniProtKB-UniRule"/>
</dbReference>
<dbReference type="CDD" id="cd06223">
    <property type="entry name" value="PRTases_typeI"/>
    <property type="match status" value="1"/>
</dbReference>
<dbReference type="FunFam" id="3.40.50.2020:FF:000020">
    <property type="entry name" value="Bifunctional protein PyrR"/>
    <property type="match status" value="1"/>
</dbReference>
<dbReference type="Gene3D" id="3.40.50.2020">
    <property type="match status" value="1"/>
</dbReference>
<dbReference type="HAMAP" id="MF_01219">
    <property type="entry name" value="PyrR"/>
    <property type="match status" value="1"/>
</dbReference>
<dbReference type="InterPro" id="IPR000836">
    <property type="entry name" value="PRibTrfase_dom"/>
</dbReference>
<dbReference type="InterPro" id="IPR029057">
    <property type="entry name" value="PRTase-like"/>
</dbReference>
<dbReference type="InterPro" id="IPR023050">
    <property type="entry name" value="PyrR"/>
</dbReference>
<dbReference type="InterPro" id="IPR050137">
    <property type="entry name" value="PyrR_bifunctional"/>
</dbReference>
<dbReference type="NCBIfam" id="NF003545">
    <property type="entry name" value="PRK05205.1-1"/>
    <property type="match status" value="1"/>
</dbReference>
<dbReference type="NCBIfam" id="NF003547">
    <property type="entry name" value="PRK05205.1-3"/>
    <property type="match status" value="1"/>
</dbReference>
<dbReference type="NCBIfam" id="NF003548">
    <property type="entry name" value="PRK05205.1-4"/>
    <property type="match status" value="1"/>
</dbReference>
<dbReference type="NCBIfam" id="NF003549">
    <property type="entry name" value="PRK05205.1-5"/>
    <property type="match status" value="1"/>
</dbReference>
<dbReference type="PANTHER" id="PTHR11608">
    <property type="entry name" value="BIFUNCTIONAL PROTEIN PYRR"/>
    <property type="match status" value="1"/>
</dbReference>
<dbReference type="PANTHER" id="PTHR11608:SF0">
    <property type="entry name" value="BIFUNCTIONAL PROTEIN PYRR"/>
    <property type="match status" value="1"/>
</dbReference>
<dbReference type="Pfam" id="PF00156">
    <property type="entry name" value="Pribosyltran"/>
    <property type="match status" value="1"/>
</dbReference>
<dbReference type="SUPFAM" id="SSF53271">
    <property type="entry name" value="PRTase-like"/>
    <property type="match status" value="1"/>
</dbReference>
<feature type="chain" id="PRO_0000294121" description="Bifunctional protein PyrR">
    <location>
        <begin position="1"/>
        <end position="181"/>
    </location>
</feature>
<feature type="short sequence motif" description="PRPP-binding" evidence="1">
    <location>
        <begin position="99"/>
        <end position="111"/>
    </location>
</feature>
<feature type="binding site" description="in other chain" evidence="1">
    <location>
        <begin position="41"/>
        <end position="42"/>
    </location>
    <ligand>
        <name>substrate</name>
        <note>ligand shared between dimeric partners</note>
    </ligand>
</feature>
<feature type="binding site" evidence="1">
    <location>
        <position position="82"/>
    </location>
    <ligand>
        <name>substrate</name>
        <note>ligand shared between dimeric partners</note>
    </ligand>
</feature>
<feature type="binding site" description="in other chain" evidence="1">
    <location>
        <position position="86"/>
    </location>
    <ligand>
        <name>substrate</name>
        <note>ligand shared between dimeric partners</note>
    </ligand>
</feature>
<feature type="binding site" description="in other chain" evidence="1">
    <location>
        <begin position="103"/>
        <end position="111"/>
    </location>
    <ligand>
        <name>substrate</name>
        <note>ligand shared between dimeric partners</note>
    </ligand>
</feature>
<feature type="binding site" description="in other chain" evidence="1">
    <location>
        <position position="136"/>
    </location>
    <ligand>
        <name>substrate</name>
        <note>ligand shared between dimeric partners</note>
    </ligand>
</feature>
<feature type="binding site" description="in other chain" evidence="1">
    <location>
        <position position="160"/>
    </location>
    <ligand>
        <name>substrate</name>
        <note>ligand shared between dimeric partners</note>
    </ligand>
</feature>
<protein>
    <recommendedName>
        <fullName>Bifunctional protein PyrR</fullName>
    </recommendedName>
    <domain>
        <recommendedName>
            <fullName>Pyrimidine operon regulatory protein</fullName>
        </recommendedName>
    </domain>
    <domain>
        <recommendedName>
            <fullName>Uracil phosphoribosyltransferase</fullName>
            <shortName>UPRTase</shortName>
            <ecNumber>2.4.2.9</ecNumber>
        </recommendedName>
    </domain>
</protein>
<name>PYRR_THET2</name>
<reference key="1">
    <citation type="journal article" date="2004" name="Nat. Biotechnol.">
        <title>The genome sequence of the extreme thermophile Thermus thermophilus.</title>
        <authorList>
            <person name="Henne A."/>
            <person name="Brueggemann H."/>
            <person name="Raasch C."/>
            <person name="Wiezer A."/>
            <person name="Hartsch T."/>
            <person name="Liesegang H."/>
            <person name="Johann A."/>
            <person name="Lienard T."/>
            <person name="Gohl O."/>
            <person name="Martinez-Arias R."/>
            <person name="Jacobi C."/>
            <person name="Starkuviene V."/>
            <person name="Schlenczeck S."/>
            <person name="Dencker S."/>
            <person name="Huber R."/>
            <person name="Klenk H.-P."/>
            <person name="Kramer W."/>
            <person name="Merkl R."/>
            <person name="Gottschalk G."/>
            <person name="Fritz H.-J."/>
        </authorList>
    </citation>
    <scope>NUCLEOTIDE SEQUENCE [LARGE SCALE GENOMIC DNA]</scope>
    <source>
        <strain>ATCC BAA-163 / DSM 7039 / HB27</strain>
    </source>
</reference>
<organism>
    <name type="scientific">Thermus thermophilus (strain ATCC BAA-163 / DSM 7039 / HB27)</name>
    <dbReference type="NCBI Taxonomy" id="262724"/>
    <lineage>
        <taxon>Bacteria</taxon>
        <taxon>Thermotogati</taxon>
        <taxon>Deinococcota</taxon>
        <taxon>Deinococci</taxon>
        <taxon>Thermales</taxon>
        <taxon>Thermaceae</taxon>
        <taxon>Thermus</taxon>
    </lineage>
</organism>
<evidence type="ECO:0000250" key="1"/>
<evidence type="ECO:0000305" key="2"/>